<evidence type="ECO:0000255" key="1">
    <source>
        <dbReference type="HAMAP-Rule" id="MF_00131"/>
    </source>
</evidence>
<feature type="chain" id="PRO_1000095729" description="Tryptophan synthase alpha chain">
    <location>
        <begin position="1"/>
        <end position="278"/>
    </location>
</feature>
<feature type="active site" description="Proton acceptor" evidence="1">
    <location>
        <position position="50"/>
    </location>
</feature>
<feature type="active site" description="Proton acceptor" evidence="1">
    <location>
        <position position="61"/>
    </location>
</feature>
<protein>
    <recommendedName>
        <fullName evidence="1">Tryptophan synthase alpha chain</fullName>
        <ecNumber evidence="1">4.2.1.20</ecNumber>
    </recommendedName>
</protein>
<comment type="function">
    <text evidence="1">The alpha subunit is responsible for the aldol cleavage of indoleglycerol phosphate to indole and glyceraldehyde 3-phosphate.</text>
</comment>
<comment type="catalytic activity">
    <reaction evidence="1">
        <text>(1S,2R)-1-C-(indol-3-yl)glycerol 3-phosphate + L-serine = D-glyceraldehyde 3-phosphate + L-tryptophan + H2O</text>
        <dbReference type="Rhea" id="RHEA:10532"/>
        <dbReference type="ChEBI" id="CHEBI:15377"/>
        <dbReference type="ChEBI" id="CHEBI:33384"/>
        <dbReference type="ChEBI" id="CHEBI:57912"/>
        <dbReference type="ChEBI" id="CHEBI:58866"/>
        <dbReference type="ChEBI" id="CHEBI:59776"/>
        <dbReference type="EC" id="4.2.1.20"/>
    </reaction>
</comment>
<comment type="pathway">
    <text evidence="1">Amino-acid biosynthesis; L-tryptophan biosynthesis; L-tryptophan from chorismate: step 5/5.</text>
</comment>
<comment type="subunit">
    <text evidence="1">Tetramer of two alpha and two beta chains.</text>
</comment>
<comment type="similarity">
    <text evidence="1">Belongs to the TrpA family.</text>
</comment>
<sequence>MTARIDAAFARCRAEGRAALVTYVMAGDPDPETSLKVLEALPKAGADIVEFGLPFTDPMADGPAIQAAGLRALKAGQDLRGTLALVRRFREGDDRTPVVLMGYYNPIHTYGVPRFLEDAQAAGIDGLIVVDLPPEEDEELCLPAREKGLAFIRLATPTTDAARLPAVLANTAGFVYYVSITGVTGTATPDFGRVSQAVGRIAAQTDLPVVVGFGVRTGAHAAEIARGADGVVVGSALVDALARSLEPGDRAGSGTVEAVAALVRELSEGVRSTVKTGA</sequence>
<organism>
    <name type="scientific">Methylorubrum populi (strain ATCC BAA-705 / NCIMB 13946 / BJ001)</name>
    <name type="common">Methylobacterium populi</name>
    <dbReference type="NCBI Taxonomy" id="441620"/>
    <lineage>
        <taxon>Bacteria</taxon>
        <taxon>Pseudomonadati</taxon>
        <taxon>Pseudomonadota</taxon>
        <taxon>Alphaproteobacteria</taxon>
        <taxon>Hyphomicrobiales</taxon>
        <taxon>Methylobacteriaceae</taxon>
        <taxon>Methylorubrum</taxon>
    </lineage>
</organism>
<keyword id="KW-0028">Amino-acid biosynthesis</keyword>
<keyword id="KW-0057">Aromatic amino acid biosynthesis</keyword>
<keyword id="KW-0456">Lyase</keyword>
<keyword id="KW-0822">Tryptophan biosynthesis</keyword>
<proteinExistence type="inferred from homology"/>
<gene>
    <name evidence="1" type="primary">trpA</name>
    <name type="ordered locus">Mpop_4960</name>
</gene>
<accession>B1ZLY7</accession>
<name>TRPA_METPB</name>
<reference key="1">
    <citation type="submission" date="2008-04" db="EMBL/GenBank/DDBJ databases">
        <title>Complete sequence of chromosome of Methylobacterium populi BJ001.</title>
        <authorList>
            <consortium name="US DOE Joint Genome Institute"/>
            <person name="Copeland A."/>
            <person name="Lucas S."/>
            <person name="Lapidus A."/>
            <person name="Glavina del Rio T."/>
            <person name="Dalin E."/>
            <person name="Tice H."/>
            <person name="Bruce D."/>
            <person name="Goodwin L."/>
            <person name="Pitluck S."/>
            <person name="Chertkov O."/>
            <person name="Brettin T."/>
            <person name="Detter J.C."/>
            <person name="Han C."/>
            <person name="Kuske C.R."/>
            <person name="Schmutz J."/>
            <person name="Larimer F."/>
            <person name="Land M."/>
            <person name="Hauser L."/>
            <person name="Kyrpides N."/>
            <person name="Mikhailova N."/>
            <person name="Marx C."/>
            <person name="Richardson P."/>
        </authorList>
    </citation>
    <scope>NUCLEOTIDE SEQUENCE [LARGE SCALE GENOMIC DNA]</scope>
    <source>
        <strain>ATCC BAA-705 / NCIMB 13946 / BJ001</strain>
    </source>
</reference>
<dbReference type="EC" id="4.2.1.20" evidence="1"/>
<dbReference type="EMBL" id="CP001029">
    <property type="protein sequence ID" value="ACB83056.1"/>
    <property type="molecule type" value="Genomic_DNA"/>
</dbReference>
<dbReference type="RefSeq" id="WP_012456654.1">
    <property type="nucleotide sequence ID" value="NC_010725.1"/>
</dbReference>
<dbReference type="SMR" id="B1ZLY7"/>
<dbReference type="STRING" id="441620.Mpop_4960"/>
<dbReference type="KEGG" id="mpo:Mpop_4960"/>
<dbReference type="eggNOG" id="COG0159">
    <property type="taxonomic scope" value="Bacteria"/>
</dbReference>
<dbReference type="HOGENOM" id="CLU_016734_0_0_5"/>
<dbReference type="OrthoDB" id="9804578at2"/>
<dbReference type="UniPathway" id="UPA00035">
    <property type="reaction ID" value="UER00044"/>
</dbReference>
<dbReference type="Proteomes" id="UP000007136">
    <property type="component" value="Chromosome"/>
</dbReference>
<dbReference type="GO" id="GO:0005829">
    <property type="term" value="C:cytosol"/>
    <property type="evidence" value="ECO:0007669"/>
    <property type="project" value="TreeGrafter"/>
</dbReference>
<dbReference type="GO" id="GO:0004834">
    <property type="term" value="F:tryptophan synthase activity"/>
    <property type="evidence" value="ECO:0007669"/>
    <property type="project" value="UniProtKB-UniRule"/>
</dbReference>
<dbReference type="CDD" id="cd04724">
    <property type="entry name" value="Tryptophan_synthase_alpha"/>
    <property type="match status" value="1"/>
</dbReference>
<dbReference type="FunFam" id="3.20.20.70:FF:000037">
    <property type="entry name" value="Tryptophan synthase alpha chain"/>
    <property type="match status" value="1"/>
</dbReference>
<dbReference type="Gene3D" id="3.20.20.70">
    <property type="entry name" value="Aldolase class I"/>
    <property type="match status" value="1"/>
</dbReference>
<dbReference type="HAMAP" id="MF_00131">
    <property type="entry name" value="Trp_synth_alpha"/>
    <property type="match status" value="1"/>
</dbReference>
<dbReference type="InterPro" id="IPR013785">
    <property type="entry name" value="Aldolase_TIM"/>
</dbReference>
<dbReference type="InterPro" id="IPR011060">
    <property type="entry name" value="RibuloseP-bd_barrel"/>
</dbReference>
<dbReference type="InterPro" id="IPR002028">
    <property type="entry name" value="Trp_synthase_suA"/>
</dbReference>
<dbReference type="NCBIfam" id="TIGR00262">
    <property type="entry name" value="trpA"/>
    <property type="match status" value="1"/>
</dbReference>
<dbReference type="PANTHER" id="PTHR43406:SF1">
    <property type="entry name" value="TRYPTOPHAN SYNTHASE ALPHA CHAIN, CHLOROPLASTIC"/>
    <property type="match status" value="1"/>
</dbReference>
<dbReference type="PANTHER" id="PTHR43406">
    <property type="entry name" value="TRYPTOPHAN SYNTHASE, ALPHA CHAIN"/>
    <property type="match status" value="1"/>
</dbReference>
<dbReference type="Pfam" id="PF00290">
    <property type="entry name" value="Trp_syntA"/>
    <property type="match status" value="1"/>
</dbReference>
<dbReference type="SUPFAM" id="SSF51366">
    <property type="entry name" value="Ribulose-phoshate binding barrel"/>
    <property type="match status" value="1"/>
</dbReference>